<protein>
    <recommendedName>
        <fullName evidence="1">Queuine tRNA-ribosyltransferase</fullName>
        <ecNumber evidence="1">2.4.2.29</ecNumber>
    </recommendedName>
    <alternativeName>
        <fullName evidence="1">Guanine insertion enzyme</fullName>
    </alternativeName>
    <alternativeName>
        <fullName evidence="1">tRNA-guanine transglycosylase</fullName>
    </alternativeName>
</protein>
<sequence>MKFELDTTDGRARRGRLVFDRGVVETPCFMPVGTYGTVKGMTPEEVEATGAQIILGNTFHLWLRPGQEIMKLHGDLHDFMQWKGPILTDSGGFQVFSLGDIRKITEQGVHFRNPINGDPIFLDPEKSMEIQYDLGSDIVMIFDECTPYPADWDYAKRSMEMSLRWAKRSRERFDSLGNKNALFGIIQGSVYEDLRDISVKGLVDIGFDGYAVGGLAVGEPKADMHRILEHVCPQIPADKPRYLMGVGKPEDLVEGVRRGIDMFDCVMPTRNARNGHLFVTDGVVKIRNAKYKSDTGPLDPECDCYTCRNYSRAYLHHLDRCNEILGARLNTIHNLRYYQRLMAGLRKAIEEGKLESFVTDFYQRQGREVPPLNVD</sequence>
<name>TGT_ECOBW</name>
<evidence type="ECO:0000255" key="1">
    <source>
        <dbReference type="HAMAP-Rule" id="MF_00168"/>
    </source>
</evidence>
<dbReference type="EC" id="2.4.2.29" evidence="1"/>
<dbReference type="EMBL" id="CP001396">
    <property type="protein sequence ID" value="ACR65714.1"/>
    <property type="molecule type" value="Genomic_DNA"/>
</dbReference>
<dbReference type="RefSeq" id="WP_000667319.1">
    <property type="nucleotide sequence ID" value="NC_012759.1"/>
</dbReference>
<dbReference type="SMR" id="C4ZTG3"/>
<dbReference type="GeneID" id="93777054"/>
<dbReference type="KEGG" id="ebw:BWG_0288"/>
<dbReference type="HOGENOM" id="CLU_022060_0_1_6"/>
<dbReference type="UniPathway" id="UPA00392"/>
<dbReference type="GO" id="GO:0005829">
    <property type="term" value="C:cytosol"/>
    <property type="evidence" value="ECO:0007669"/>
    <property type="project" value="TreeGrafter"/>
</dbReference>
<dbReference type="GO" id="GO:0046872">
    <property type="term" value="F:metal ion binding"/>
    <property type="evidence" value="ECO:0007669"/>
    <property type="project" value="UniProtKB-KW"/>
</dbReference>
<dbReference type="GO" id="GO:0008479">
    <property type="term" value="F:tRNA-guanosine(34) queuine transglycosylase activity"/>
    <property type="evidence" value="ECO:0007669"/>
    <property type="project" value="UniProtKB-UniRule"/>
</dbReference>
<dbReference type="GO" id="GO:0008616">
    <property type="term" value="P:queuosine biosynthetic process"/>
    <property type="evidence" value="ECO:0007669"/>
    <property type="project" value="UniProtKB-UniRule"/>
</dbReference>
<dbReference type="GO" id="GO:0002099">
    <property type="term" value="P:tRNA wobble guanine modification"/>
    <property type="evidence" value="ECO:0007669"/>
    <property type="project" value="TreeGrafter"/>
</dbReference>
<dbReference type="GO" id="GO:0101030">
    <property type="term" value="P:tRNA-guanine transglycosylation"/>
    <property type="evidence" value="ECO:0007669"/>
    <property type="project" value="InterPro"/>
</dbReference>
<dbReference type="FunFam" id="3.20.20.105:FF:000001">
    <property type="entry name" value="Queuine tRNA-ribosyltransferase"/>
    <property type="match status" value="1"/>
</dbReference>
<dbReference type="Gene3D" id="3.20.20.105">
    <property type="entry name" value="Queuine tRNA-ribosyltransferase-like"/>
    <property type="match status" value="1"/>
</dbReference>
<dbReference type="HAMAP" id="MF_00168">
    <property type="entry name" value="Q_tRNA_Tgt"/>
    <property type="match status" value="1"/>
</dbReference>
<dbReference type="InterPro" id="IPR050076">
    <property type="entry name" value="ArchSynthase1/Queuine_TRR"/>
</dbReference>
<dbReference type="InterPro" id="IPR004803">
    <property type="entry name" value="TGT"/>
</dbReference>
<dbReference type="InterPro" id="IPR036511">
    <property type="entry name" value="TGT-like_sf"/>
</dbReference>
<dbReference type="InterPro" id="IPR002616">
    <property type="entry name" value="tRNA_ribo_trans-like"/>
</dbReference>
<dbReference type="NCBIfam" id="TIGR00430">
    <property type="entry name" value="Q_tRNA_tgt"/>
    <property type="match status" value="1"/>
</dbReference>
<dbReference type="NCBIfam" id="TIGR00449">
    <property type="entry name" value="tgt_general"/>
    <property type="match status" value="1"/>
</dbReference>
<dbReference type="PANTHER" id="PTHR46499">
    <property type="entry name" value="QUEUINE TRNA-RIBOSYLTRANSFERASE"/>
    <property type="match status" value="1"/>
</dbReference>
<dbReference type="PANTHER" id="PTHR46499:SF1">
    <property type="entry name" value="QUEUINE TRNA-RIBOSYLTRANSFERASE"/>
    <property type="match status" value="1"/>
</dbReference>
<dbReference type="Pfam" id="PF01702">
    <property type="entry name" value="TGT"/>
    <property type="match status" value="1"/>
</dbReference>
<dbReference type="SUPFAM" id="SSF51713">
    <property type="entry name" value="tRNA-guanine transglycosylase"/>
    <property type="match status" value="1"/>
</dbReference>
<keyword id="KW-0328">Glycosyltransferase</keyword>
<keyword id="KW-0479">Metal-binding</keyword>
<keyword id="KW-0671">Queuosine biosynthesis</keyword>
<keyword id="KW-0808">Transferase</keyword>
<keyword id="KW-0819">tRNA processing</keyword>
<keyword id="KW-0862">Zinc</keyword>
<comment type="function">
    <text evidence="1">Catalyzes the base-exchange of a guanine (G) residue with the queuine precursor 7-aminomethyl-7-deazaguanine (PreQ1) at position 34 (anticodon wobble position) in tRNAs with GU(N) anticodons (tRNA-Asp, -Asn, -His and -Tyr). Catalysis occurs through a double-displacement mechanism. The nucleophile active site attacks the C1' of nucleotide 34 to detach the guanine base from the RNA, forming a covalent enzyme-RNA intermediate. The proton acceptor active site deprotonates the incoming PreQ1, allowing a nucleophilic attack on the C1' of the ribose to form the product. After dissociation, two additional enzymatic reactions on the tRNA convert PreQ1 to queuine (Q), resulting in the hypermodified nucleoside queuosine (7-(((4,5-cis-dihydroxy-2-cyclopenten-1-yl)amino)methyl)-7-deazaguanosine).</text>
</comment>
<comment type="catalytic activity">
    <reaction evidence="1">
        <text>7-aminomethyl-7-carbaguanine + guanosine(34) in tRNA = 7-aminomethyl-7-carbaguanosine(34) in tRNA + guanine</text>
        <dbReference type="Rhea" id="RHEA:24104"/>
        <dbReference type="Rhea" id="RHEA-COMP:10341"/>
        <dbReference type="Rhea" id="RHEA-COMP:10342"/>
        <dbReference type="ChEBI" id="CHEBI:16235"/>
        <dbReference type="ChEBI" id="CHEBI:58703"/>
        <dbReference type="ChEBI" id="CHEBI:74269"/>
        <dbReference type="ChEBI" id="CHEBI:82833"/>
        <dbReference type="EC" id="2.4.2.29"/>
    </reaction>
</comment>
<comment type="cofactor">
    <cofactor evidence="1">
        <name>Zn(2+)</name>
        <dbReference type="ChEBI" id="CHEBI:29105"/>
    </cofactor>
    <text evidence="1">Binds 1 zinc ion per subunit.</text>
</comment>
<comment type="pathway">
    <text evidence="1">tRNA modification; tRNA-queuosine biosynthesis.</text>
</comment>
<comment type="subunit">
    <text evidence="1">Homodimer. Within each dimer, one monomer is responsible for RNA recognition and catalysis, while the other monomer binds to the replacement base PreQ1.</text>
</comment>
<comment type="similarity">
    <text evidence="1">Belongs to the queuine tRNA-ribosyltransferase family.</text>
</comment>
<organism>
    <name type="scientific">Escherichia coli (strain K12 / MC4100 / BW2952)</name>
    <dbReference type="NCBI Taxonomy" id="595496"/>
    <lineage>
        <taxon>Bacteria</taxon>
        <taxon>Pseudomonadati</taxon>
        <taxon>Pseudomonadota</taxon>
        <taxon>Gammaproteobacteria</taxon>
        <taxon>Enterobacterales</taxon>
        <taxon>Enterobacteriaceae</taxon>
        <taxon>Escherichia</taxon>
    </lineage>
</organism>
<gene>
    <name evidence="1" type="primary">tgt</name>
    <name type="ordered locus">BWG_0288</name>
</gene>
<reference key="1">
    <citation type="journal article" date="2009" name="J. Bacteriol.">
        <title>Genomic sequencing reveals regulatory mutations and recombinational events in the widely used MC4100 lineage of Escherichia coli K-12.</title>
        <authorList>
            <person name="Ferenci T."/>
            <person name="Zhou Z."/>
            <person name="Betteridge T."/>
            <person name="Ren Y."/>
            <person name="Liu Y."/>
            <person name="Feng L."/>
            <person name="Reeves P.R."/>
            <person name="Wang L."/>
        </authorList>
    </citation>
    <scope>NUCLEOTIDE SEQUENCE [LARGE SCALE GENOMIC DNA]</scope>
    <source>
        <strain>K12 / MC4100 / BW2952</strain>
    </source>
</reference>
<accession>C4ZTG3</accession>
<proteinExistence type="inferred from homology"/>
<feature type="chain" id="PRO_1000203652" description="Queuine tRNA-ribosyltransferase">
    <location>
        <begin position="1"/>
        <end position="375"/>
    </location>
</feature>
<feature type="region of interest" description="RNA binding" evidence="1">
    <location>
        <begin position="245"/>
        <end position="251"/>
    </location>
</feature>
<feature type="region of interest" description="RNA binding; important for wobble base 34 recognition" evidence="1">
    <location>
        <begin position="269"/>
        <end position="273"/>
    </location>
</feature>
<feature type="active site" description="Proton acceptor" evidence="1">
    <location>
        <position position="89"/>
    </location>
</feature>
<feature type="active site" description="Nucleophile" evidence="1">
    <location>
        <position position="264"/>
    </location>
</feature>
<feature type="binding site" evidence="1">
    <location>
        <begin position="89"/>
        <end position="93"/>
    </location>
    <ligand>
        <name>substrate</name>
    </ligand>
</feature>
<feature type="binding site" evidence="1">
    <location>
        <position position="143"/>
    </location>
    <ligand>
        <name>substrate</name>
    </ligand>
</feature>
<feature type="binding site" evidence="1">
    <location>
        <position position="187"/>
    </location>
    <ligand>
        <name>substrate</name>
    </ligand>
</feature>
<feature type="binding site" evidence="1">
    <location>
        <position position="214"/>
    </location>
    <ligand>
        <name>substrate</name>
    </ligand>
</feature>
<feature type="binding site" evidence="1">
    <location>
        <position position="302"/>
    </location>
    <ligand>
        <name>Zn(2+)</name>
        <dbReference type="ChEBI" id="CHEBI:29105"/>
    </ligand>
</feature>
<feature type="binding site" evidence="1">
    <location>
        <position position="304"/>
    </location>
    <ligand>
        <name>Zn(2+)</name>
        <dbReference type="ChEBI" id="CHEBI:29105"/>
    </ligand>
</feature>
<feature type="binding site" evidence="1">
    <location>
        <position position="307"/>
    </location>
    <ligand>
        <name>Zn(2+)</name>
        <dbReference type="ChEBI" id="CHEBI:29105"/>
    </ligand>
</feature>
<feature type="binding site" evidence="1">
    <location>
        <position position="333"/>
    </location>
    <ligand>
        <name>Zn(2+)</name>
        <dbReference type="ChEBI" id="CHEBI:29105"/>
    </ligand>
</feature>